<proteinExistence type="evidence at protein level"/>
<protein>
    <recommendedName>
        <fullName>Biogenesis of lysosome-related organelles complex 1 subunit 6</fullName>
        <shortName>BLOC-1 subunit 6</shortName>
    </recommendedName>
    <alternativeName>
        <fullName>Pallid protein homolog</fullName>
    </alternativeName>
</protein>
<sequence>MSNTEHNVESKNVTDTLDEILRLQEDIQARIGSSNHNLETNFESIKDFVSRAHAYIPILNQISKDMIEICERTQALKKKTSQLELSDTNIEDGSTTSTPTTTNKSQ</sequence>
<comment type="function">
    <text evidence="3">Component of the biogenesis of lysosome-related organelles complex-1 (BLOC-1) involved in gut granule biogenesis.</text>
</comment>
<comment type="subunit">
    <text evidence="1 3">Homodimer (isoform 1). Component of the biogenesis of lysosome-related organelles complex-1 (BLOC-1) composed at least of blos-1, blos-2, blos-4, dsbn-1, glo-2, mutd-1 and snpn-1 (By similarity). Isoform 1 interacts with blos-1 and blos-4.</text>
</comment>
<comment type="subcellular location">
    <subcellularLocation>
        <location evidence="3">Cytoplasm</location>
    </subcellularLocation>
    <subcellularLocation>
        <location evidence="3">Endosome</location>
    </subcellularLocation>
</comment>
<comment type="developmental stage">
    <text evidence="3">Expressed in developing embryos in intestinal cells (at protein level).</text>
</comment>
<comment type="similarity">
    <text evidence="4">Belongs to the BLOC1S6 family.</text>
</comment>
<evidence type="ECO:0000250" key="1"/>
<evidence type="ECO:0000256" key="2">
    <source>
        <dbReference type="SAM" id="MobiDB-lite"/>
    </source>
</evidence>
<evidence type="ECO:0000269" key="3">
    <source>
    </source>
</evidence>
<evidence type="ECO:0000305" key="4"/>
<feature type="chain" id="PRO_0000420199" description="Biogenesis of lysosome-related organelles complex 1 subunit 6">
    <location>
        <begin position="1"/>
        <end position="106"/>
    </location>
</feature>
<feature type="region of interest" description="Disordered" evidence="2">
    <location>
        <begin position="78"/>
        <end position="106"/>
    </location>
</feature>
<feature type="compositionally biased region" description="Polar residues" evidence="2">
    <location>
        <begin position="82"/>
        <end position="93"/>
    </location>
</feature>
<feature type="compositionally biased region" description="Low complexity" evidence="2">
    <location>
        <begin position="94"/>
        <end position="106"/>
    </location>
</feature>
<reference key="1">
    <citation type="journal article" date="1998" name="Science">
        <title>Genome sequence of the nematode C. elegans: a platform for investigating biology.</title>
        <authorList>
            <consortium name="The C. elegans sequencing consortium"/>
        </authorList>
    </citation>
    <scope>NUCLEOTIDE SEQUENCE [LARGE SCALE GENOMIC DNA]</scope>
    <source>
        <strain>Bristol N2</strain>
    </source>
</reference>
<reference key="2">
    <citation type="journal article" date="2012" name="PLoS ONE">
        <title>C. elegans BLOC-1 Functions in Trafficking to Lysosome-Related Gut Granules.</title>
        <authorList>
            <person name="Hermann G.J."/>
            <person name="Scavarda E."/>
            <person name="Weis A.M."/>
            <person name="Saxton D.S."/>
            <person name="Thomas L.L."/>
            <person name="Salesky R."/>
            <person name="Somhegyi H."/>
            <person name="Curtin T.P."/>
            <person name="Barrett A."/>
            <person name="Foster O.K."/>
            <person name="Vine A."/>
            <person name="Erlich K."/>
            <person name="Kwan E."/>
            <person name="Rabbitts B.M."/>
            <person name="Warren K."/>
        </authorList>
    </citation>
    <scope>IDENTIFICATION IN THE BLOC-1 COMPLEX</scope>
    <scope>FUNCTION</scope>
    <scope>SUBUNIT</scope>
    <scope>INTERACTION WITH BLOS-1 AND BLOS-4</scope>
    <scope>SUBCELLULAR LOCATION</scope>
    <scope>DEVELOPMENTAL STAGE</scope>
</reference>
<dbReference type="EMBL" id="JX401287">
    <property type="protein sequence ID" value="AFQ55889.1"/>
    <property type="molecule type" value="mRNA"/>
</dbReference>
<dbReference type="EMBL" id="JX401288">
    <property type="protein sequence ID" value="AFQ55890.1"/>
    <property type="molecule type" value="mRNA"/>
</dbReference>
<dbReference type="EMBL" id="FO080263">
    <property type="protein sequence ID" value="CCD62434.2"/>
    <property type="molecule type" value="Genomic_DNA"/>
</dbReference>
<dbReference type="RefSeq" id="NP_001293460.1">
    <property type="nucleotide sequence ID" value="NM_001306531.4"/>
</dbReference>
<dbReference type="RefSeq" id="NP_491461.3">
    <property type="nucleotide sequence ID" value="NM_059060.3"/>
</dbReference>
<dbReference type="SMR" id="O01822"/>
<dbReference type="BioGRID" id="51187">
    <property type="interactions" value="3"/>
</dbReference>
<dbReference type="ComplexPortal" id="CPX-479">
    <property type="entry name" value="Bloc-1 complex"/>
</dbReference>
<dbReference type="FunCoup" id="O01822">
    <property type="interactions" value="127"/>
</dbReference>
<dbReference type="STRING" id="6239.F57C9.3a.1"/>
<dbReference type="PaxDb" id="6239-F57C9.3a"/>
<dbReference type="EnsemblMetazoa" id="F57C9.3b.1">
    <property type="protein sequence ID" value="F57C9.3b.1"/>
    <property type="gene ID" value="WBGene00019010"/>
</dbReference>
<dbReference type="GeneID" id="186447"/>
<dbReference type="KEGG" id="cel:CELE_F57C9.3"/>
<dbReference type="UCSC" id="F57C9.3">
    <property type="organism name" value="c. elegans"/>
</dbReference>
<dbReference type="AGR" id="WB:WBGene00019010"/>
<dbReference type="CTD" id="186447"/>
<dbReference type="WormBase" id="F57C9.3b">
    <property type="protein sequence ID" value="CE46926"/>
    <property type="gene ID" value="WBGene00019010"/>
    <property type="gene designation" value="glo-2"/>
</dbReference>
<dbReference type="eggNOG" id="ENOG502TJ5Z">
    <property type="taxonomic scope" value="Eukaryota"/>
</dbReference>
<dbReference type="InParanoid" id="O01822"/>
<dbReference type="OrthoDB" id="5818058at2759"/>
<dbReference type="PRO" id="PR:O01822"/>
<dbReference type="Proteomes" id="UP000001940">
    <property type="component" value="Chromosome I"/>
</dbReference>
<dbReference type="Bgee" id="WBGene00019010">
    <property type="expression patterns" value="Expressed in pharyngeal muscle cell (C elegans) and 3 other cell types or tissues"/>
</dbReference>
<dbReference type="ExpressionAtlas" id="O01822">
    <property type="expression patterns" value="baseline"/>
</dbReference>
<dbReference type="GO" id="GO:0031082">
    <property type="term" value="C:BLOC complex"/>
    <property type="evidence" value="ECO:0000303"/>
    <property type="project" value="ComplexPortal"/>
</dbReference>
<dbReference type="GO" id="GO:0031083">
    <property type="term" value="C:BLOC-1 complex"/>
    <property type="evidence" value="ECO:0000304"/>
    <property type="project" value="UniProtKB"/>
</dbReference>
<dbReference type="GO" id="GO:0005737">
    <property type="term" value="C:cytoplasm"/>
    <property type="evidence" value="ECO:0000314"/>
    <property type="project" value="UniProtKB"/>
</dbReference>
<dbReference type="GO" id="GO:0005768">
    <property type="term" value="C:endosome"/>
    <property type="evidence" value="ECO:0000314"/>
    <property type="project" value="UniProtKB"/>
</dbReference>
<dbReference type="GO" id="GO:0042803">
    <property type="term" value="F:protein homodimerization activity"/>
    <property type="evidence" value="ECO:0000314"/>
    <property type="project" value="UniProtKB"/>
</dbReference>
<dbReference type="GO" id="GO:0016197">
    <property type="term" value="P:endosomal transport"/>
    <property type="evidence" value="ECO:0000315"/>
    <property type="project" value="UniProtKB"/>
</dbReference>
<dbReference type="GO" id="GO:1904757">
    <property type="term" value="P:positive regulation of gut granule assembly"/>
    <property type="evidence" value="ECO:0000303"/>
    <property type="project" value="ComplexPortal"/>
</dbReference>
<dbReference type="GO" id="GO:0090316">
    <property type="term" value="P:positive regulation of intracellular protein transport"/>
    <property type="evidence" value="ECO:0000315"/>
    <property type="project" value="UniProtKB"/>
</dbReference>
<gene>
    <name type="primary">glo-2</name>
    <name type="ORF">F57C9.3</name>
</gene>
<keyword id="KW-0963">Cytoplasm</keyword>
<keyword id="KW-0967">Endosome</keyword>
<keyword id="KW-1185">Reference proteome</keyword>
<name>BL1S6_CAEEL</name>
<organism>
    <name type="scientific">Caenorhabditis elegans</name>
    <dbReference type="NCBI Taxonomy" id="6239"/>
    <lineage>
        <taxon>Eukaryota</taxon>
        <taxon>Metazoa</taxon>
        <taxon>Ecdysozoa</taxon>
        <taxon>Nematoda</taxon>
        <taxon>Chromadorea</taxon>
        <taxon>Rhabditida</taxon>
        <taxon>Rhabditina</taxon>
        <taxon>Rhabditomorpha</taxon>
        <taxon>Rhabditoidea</taxon>
        <taxon>Rhabditidae</taxon>
        <taxon>Peloderinae</taxon>
        <taxon>Caenorhabditis</taxon>
    </lineage>
</organism>
<accession>O01822</accession>
<accession>J7JQW0</accession>